<keyword id="KW-0010">Activator</keyword>
<keyword id="KW-0963">Cytoplasm</keyword>
<keyword id="KW-0217">Developmental protein</keyword>
<keyword id="KW-0221">Differentiation</keyword>
<keyword id="KW-0238">DNA-binding</keyword>
<keyword id="KW-0287">Flowering</keyword>
<keyword id="KW-0539">Nucleus</keyword>
<keyword id="KW-1185">Reference proteome</keyword>
<keyword id="KW-0804">Transcription</keyword>
<keyword id="KW-0805">Transcription regulation</keyword>
<name>SOC1_ARATH</name>
<feature type="chain" id="PRO_0000199486" description="MADS-box protein SOC1">
    <location>
        <begin position="1"/>
        <end position="214"/>
    </location>
</feature>
<feature type="domain" description="MADS-box" evidence="1">
    <location>
        <begin position="3"/>
        <end position="57"/>
    </location>
</feature>
<feature type="domain" description="K-box" evidence="2">
    <location>
        <begin position="87"/>
        <end position="177"/>
    </location>
</feature>
<feature type="region of interest" description="Disordered" evidence="3">
    <location>
        <begin position="162"/>
        <end position="214"/>
    </location>
</feature>
<feature type="compositionally biased region" description="Basic and acidic residues" evidence="3">
    <location>
        <begin position="162"/>
        <end position="177"/>
    </location>
</feature>
<feature type="compositionally biased region" description="Polar residues" evidence="3">
    <location>
        <begin position="178"/>
        <end position="187"/>
    </location>
</feature>
<feature type="mutagenesis site" description="In sso36; suppression of early flowering time mediated by SOC1 over-expression." evidence="9">
    <original>R</original>
    <variation>K</variation>
    <location>
        <position position="24"/>
    </location>
</feature>
<feature type="mutagenesis site" description="In sso11; partial suppression of early flowering time mediated by SOC1 overexpression." evidence="9">
    <original>E</original>
    <variation>K</variation>
    <location>
        <position position="34"/>
    </location>
</feature>
<feature type="mutagenesis site" description="In sso4; partial suppression of early flowering time mediated by SOC1 overexpression." evidence="9">
    <original>G</original>
    <variation>E</variation>
    <location>
        <position position="113"/>
    </location>
</feature>
<sequence>MVRGKTQMKRIENATSRQVTFSKRRNGLLKKAFELSVLCDAEVSLIIFSPKGKLYEFASSNMQDTIDRYLRHTKDRVSTKPVSEENMQHLKYEAANMMKKIEQLEASKRKLLGEGIGTCSIEELQQIEQQLEKSVKCIRARKTQVFKEQIEQLKQKEKALAAENEKLSEKWGSHESEVWSNKNQESTGRGDEESSPSSEVETQLFIGLPCSSRK</sequence>
<dbReference type="EMBL" id="AC003680">
    <property type="protein sequence ID" value="AAC06175.1"/>
    <property type="molecule type" value="Genomic_DNA"/>
</dbReference>
<dbReference type="EMBL" id="CP002685">
    <property type="protein sequence ID" value="AEC10583.1"/>
    <property type="molecule type" value="Genomic_DNA"/>
</dbReference>
<dbReference type="EMBL" id="AY007726">
    <property type="protein sequence ID" value="AAG16297.1"/>
    <property type="molecule type" value="mRNA"/>
</dbReference>
<dbReference type="EMBL" id="AF385731">
    <property type="protein sequence ID" value="AAK60321.1"/>
    <property type="molecule type" value="mRNA"/>
</dbReference>
<dbReference type="EMBL" id="AY093967">
    <property type="protein sequence ID" value="AAM16228.1"/>
    <property type="molecule type" value="mRNA"/>
</dbReference>
<dbReference type="PIR" id="T00879">
    <property type="entry name" value="T00879"/>
</dbReference>
<dbReference type="RefSeq" id="NP_182090.1">
    <property type="nucleotide sequence ID" value="NM_130128.4"/>
</dbReference>
<dbReference type="SMR" id="O64645"/>
<dbReference type="BioGRID" id="4510">
    <property type="interactions" value="35"/>
</dbReference>
<dbReference type="DIP" id="DIP-33799N"/>
<dbReference type="ELM" id="O64645"/>
<dbReference type="FunCoup" id="O64645">
    <property type="interactions" value="36"/>
</dbReference>
<dbReference type="IntAct" id="O64645">
    <property type="interactions" value="36"/>
</dbReference>
<dbReference type="STRING" id="3702.O64645"/>
<dbReference type="PaxDb" id="3702-AT2G45660.1"/>
<dbReference type="ProteomicsDB" id="232647"/>
<dbReference type="EnsemblPlants" id="AT2G45660.1">
    <property type="protein sequence ID" value="AT2G45660.1"/>
    <property type="gene ID" value="AT2G45660"/>
</dbReference>
<dbReference type="GeneID" id="819174"/>
<dbReference type="Gramene" id="AT2G45660.1">
    <property type="protein sequence ID" value="AT2G45660.1"/>
    <property type="gene ID" value="AT2G45660"/>
</dbReference>
<dbReference type="KEGG" id="ath:AT2G45660"/>
<dbReference type="Araport" id="AT2G45660"/>
<dbReference type="TAIR" id="AT2G45660">
    <property type="gene designation" value="AGL20"/>
</dbReference>
<dbReference type="eggNOG" id="KOG0014">
    <property type="taxonomic scope" value="Eukaryota"/>
</dbReference>
<dbReference type="HOGENOM" id="CLU_053053_0_4_1"/>
<dbReference type="InParanoid" id="O64645"/>
<dbReference type="OMA" id="SMQETIG"/>
<dbReference type="OrthoDB" id="1898716at2759"/>
<dbReference type="PhylomeDB" id="O64645"/>
<dbReference type="PRO" id="PR:O64645"/>
<dbReference type="Proteomes" id="UP000006548">
    <property type="component" value="Chromosome 2"/>
</dbReference>
<dbReference type="ExpressionAtlas" id="O64645">
    <property type="expression patterns" value="baseline and differential"/>
</dbReference>
<dbReference type="GO" id="GO:0005737">
    <property type="term" value="C:cytoplasm"/>
    <property type="evidence" value="ECO:0000314"/>
    <property type="project" value="UniProtKB"/>
</dbReference>
<dbReference type="GO" id="GO:0005634">
    <property type="term" value="C:nucleus"/>
    <property type="evidence" value="ECO:0000314"/>
    <property type="project" value="UniProtKB"/>
</dbReference>
<dbReference type="GO" id="GO:0003700">
    <property type="term" value="F:DNA-binding transcription factor activity"/>
    <property type="evidence" value="ECO:0000250"/>
    <property type="project" value="TAIR"/>
</dbReference>
<dbReference type="GO" id="GO:0000981">
    <property type="term" value="F:DNA-binding transcription factor activity, RNA polymerase II-specific"/>
    <property type="evidence" value="ECO:0000353"/>
    <property type="project" value="TAIR"/>
</dbReference>
<dbReference type="GO" id="GO:0046983">
    <property type="term" value="F:protein dimerization activity"/>
    <property type="evidence" value="ECO:0007669"/>
    <property type="project" value="InterPro"/>
</dbReference>
<dbReference type="GO" id="GO:0000977">
    <property type="term" value="F:RNA polymerase II transcription regulatory region sequence-specific DNA binding"/>
    <property type="evidence" value="ECO:0007669"/>
    <property type="project" value="InterPro"/>
</dbReference>
<dbReference type="GO" id="GO:0030154">
    <property type="term" value="P:cell differentiation"/>
    <property type="evidence" value="ECO:0007669"/>
    <property type="project" value="UniProtKB-KW"/>
</dbReference>
<dbReference type="GO" id="GO:0009908">
    <property type="term" value="P:flower development"/>
    <property type="evidence" value="ECO:0000304"/>
    <property type="project" value="TAIR"/>
</dbReference>
<dbReference type="GO" id="GO:0010077">
    <property type="term" value="P:maintenance of inflorescence meristem identity"/>
    <property type="evidence" value="ECO:0000316"/>
    <property type="project" value="TAIR"/>
</dbReference>
<dbReference type="GO" id="GO:0045893">
    <property type="term" value="P:positive regulation of DNA-templated transcription"/>
    <property type="evidence" value="ECO:0000270"/>
    <property type="project" value="UniProtKB"/>
</dbReference>
<dbReference type="GO" id="GO:0009911">
    <property type="term" value="P:positive regulation of flower development"/>
    <property type="evidence" value="ECO:0000315"/>
    <property type="project" value="TAIR"/>
</dbReference>
<dbReference type="GO" id="GO:0045944">
    <property type="term" value="P:positive regulation of transcription by RNA polymerase II"/>
    <property type="evidence" value="ECO:0007669"/>
    <property type="project" value="InterPro"/>
</dbReference>
<dbReference type="GO" id="GO:0009409">
    <property type="term" value="P:response to cold"/>
    <property type="evidence" value="ECO:0000270"/>
    <property type="project" value="TAIR"/>
</dbReference>
<dbReference type="GO" id="GO:0009739">
    <property type="term" value="P:response to gibberellin"/>
    <property type="evidence" value="ECO:0000270"/>
    <property type="project" value="UniProtKB"/>
</dbReference>
<dbReference type="CDD" id="cd00265">
    <property type="entry name" value="MADS_MEF2_like"/>
    <property type="match status" value="1"/>
</dbReference>
<dbReference type="FunFam" id="3.40.1810.10:FF:000012">
    <property type="entry name" value="MADS-box protein SOC1"/>
    <property type="match status" value="1"/>
</dbReference>
<dbReference type="Gene3D" id="3.40.1810.10">
    <property type="entry name" value="Transcription factor, MADS-box"/>
    <property type="match status" value="1"/>
</dbReference>
<dbReference type="InterPro" id="IPR050142">
    <property type="entry name" value="MADS-box/MEF2_TF"/>
</dbReference>
<dbReference type="InterPro" id="IPR033896">
    <property type="entry name" value="MEF2-like_N"/>
</dbReference>
<dbReference type="InterPro" id="IPR002487">
    <property type="entry name" value="TF_Kbox"/>
</dbReference>
<dbReference type="InterPro" id="IPR002100">
    <property type="entry name" value="TF_MADSbox"/>
</dbReference>
<dbReference type="InterPro" id="IPR036879">
    <property type="entry name" value="TF_MADSbox_sf"/>
</dbReference>
<dbReference type="PANTHER" id="PTHR48019">
    <property type="entry name" value="SERUM RESPONSE FACTOR HOMOLOG"/>
    <property type="match status" value="1"/>
</dbReference>
<dbReference type="Pfam" id="PF01486">
    <property type="entry name" value="K-box"/>
    <property type="match status" value="1"/>
</dbReference>
<dbReference type="Pfam" id="PF00319">
    <property type="entry name" value="SRF-TF"/>
    <property type="match status" value="1"/>
</dbReference>
<dbReference type="PRINTS" id="PR00404">
    <property type="entry name" value="MADSDOMAIN"/>
</dbReference>
<dbReference type="SMART" id="SM00432">
    <property type="entry name" value="MADS"/>
    <property type="match status" value="1"/>
</dbReference>
<dbReference type="SUPFAM" id="SSF55455">
    <property type="entry name" value="SRF-like"/>
    <property type="match status" value="1"/>
</dbReference>
<dbReference type="PROSITE" id="PS51297">
    <property type="entry name" value="K_BOX"/>
    <property type="match status" value="1"/>
</dbReference>
<dbReference type="PROSITE" id="PS00350">
    <property type="entry name" value="MADS_BOX_1"/>
    <property type="match status" value="1"/>
</dbReference>
<dbReference type="PROSITE" id="PS50066">
    <property type="entry name" value="MADS_BOX_2"/>
    <property type="match status" value="1"/>
</dbReference>
<proteinExistence type="evidence at protein level"/>
<evidence type="ECO:0000255" key="1">
    <source>
        <dbReference type="PROSITE-ProRule" id="PRU00251"/>
    </source>
</evidence>
<evidence type="ECO:0000255" key="2">
    <source>
        <dbReference type="PROSITE-ProRule" id="PRU00629"/>
    </source>
</evidence>
<evidence type="ECO:0000256" key="3">
    <source>
        <dbReference type="SAM" id="MobiDB-lite"/>
    </source>
</evidence>
<evidence type="ECO:0000269" key="4">
    <source>
    </source>
</evidence>
<evidence type="ECO:0000269" key="5">
    <source>
    </source>
</evidence>
<evidence type="ECO:0000269" key="6">
    <source>
    </source>
</evidence>
<evidence type="ECO:0000269" key="7">
    <source>
    </source>
</evidence>
<evidence type="ECO:0000269" key="8">
    <source>
    </source>
</evidence>
<evidence type="ECO:0000269" key="9">
    <source>
    </source>
</evidence>
<evidence type="ECO:0000269" key="10">
    <source>
    </source>
</evidence>
<evidence type="ECO:0000269" key="11">
    <source>
    </source>
</evidence>
<evidence type="ECO:0000269" key="12">
    <source>
    </source>
</evidence>
<evidence type="ECO:0000303" key="13">
    <source>
    </source>
</evidence>
<evidence type="ECO:0000303" key="14">
    <source>
    </source>
</evidence>
<evidence type="ECO:0000303" key="15">
    <source>
    </source>
</evidence>
<evidence type="ECO:0000303" key="16">
    <source>
    </source>
</evidence>
<evidence type="ECO:0000303" key="17">
    <source>
    </source>
</evidence>
<evidence type="ECO:0000312" key="18">
    <source>
        <dbReference type="Araport" id="AT2G45660"/>
    </source>
</evidence>
<evidence type="ECO:0000312" key="19">
    <source>
        <dbReference type="EMBL" id="AAC06175.1"/>
    </source>
</evidence>
<gene>
    <name evidence="15 16 17" type="primary">SOC1</name>
    <name evidence="13 14" type="synonym">AGL20</name>
    <name evidence="18" type="ordered locus">At2g45660</name>
    <name evidence="19" type="ORF">F17K2.19</name>
</gene>
<accession>O64645</accession>
<organism>
    <name type="scientific">Arabidopsis thaliana</name>
    <name type="common">Mouse-ear cress</name>
    <dbReference type="NCBI Taxonomy" id="3702"/>
    <lineage>
        <taxon>Eukaryota</taxon>
        <taxon>Viridiplantae</taxon>
        <taxon>Streptophyta</taxon>
        <taxon>Embryophyta</taxon>
        <taxon>Tracheophyta</taxon>
        <taxon>Spermatophyta</taxon>
        <taxon>Magnoliopsida</taxon>
        <taxon>eudicotyledons</taxon>
        <taxon>Gunneridae</taxon>
        <taxon>Pentapetalae</taxon>
        <taxon>rosids</taxon>
        <taxon>malvids</taxon>
        <taxon>Brassicales</taxon>
        <taxon>Brassicaceae</taxon>
        <taxon>Camelineae</taxon>
        <taxon>Arabidopsis</taxon>
    </lineage>
</organism>
<comment type="function">
    <text evidence="4 8 9 10">Transcription activator active in flowering time control. May integrate signals from the photoperiod, vernalization and autonomous floral induction pathways. Can modulate class B and C homeotic genes expression. When associated with AGL24, mediates effect of gibberellins on flowering under short-day conditions, and regulates the expression of LEAFY (LFY), which links floral induction and floral development.</text>
</comment>
<comment type="subunit">
    <text evidence="6 9 12">Forms a heterodimer with AGL24 through MADS-box domain. Interacts with AGL15, AGL16 and AGL19 (PubMed:15805477, PubMed:18466303). Interacts with OXS3 in the nucleus (PubMed:31540691).</text>
</comment>
<comment type="interaction">
    <interactant intactId="EBI-592041">
        <id>O64645</id>
    </interactant>
    <interactant intactId="EBI-621912">
        <id>Q38876</id>
        <label>AGL8</label>
    </interactant>
    <organismsDiffer>false</organismsDiffer>
    <experiments>4</experiments>
</comment>
<comment type="interaction">
    <interactant intactId="EBI-592041">
        <id>O64645</id>
    </interactant>
    <interactant intactId="EBI-592003">
        <id>P35631</id>
        <label>AP1</label>
    </interactant>
    <organismsDiffer>false</organismsDiffer>
    <experiments>5</experiments>
</comment>
<comment type="interaction">
    <interactant intactId="EBI-592041">
        <id>O64645</id>
    </interactant>
    <interactant intactId="EBI-592136">
        <id>Q39081</id>
        <label>CAL</label>
    </interactant>
    <organismsDiffer>false</organismsDiffer>
    <experiments>4</experiments>
</comment>
<comment type="interaction">
    <interactant intactId="EBI-592041">
        <id>O64645</id>
    </interactant>
    <interactant intactId="EBI-2618990">
        <id>Q9SL42</id>
        <label>PIN1</label>
    </interactant>
    <organismsDiffer>false</organismsDiffer>
    <experiments>3</experiments>
</comment>
<comment type="interaction">
    <interactant intactId="EBI-592041">
        <id>O64645</id>
    </interactant>
    <interactant intactId="EBI-16100490">
        <id>Q2NJQ2</id>
        <label>AYWB_224</label>
    </interactant>
    <organismsDiffer>true</organismsDiffer>
    <experiments>3</experiments>
</comment>
<comment type="subcellular location">
    <subcellularLocation>
        <location evidence="1 9 12">Nucleus</location>
    </subcellularLocation>
    <subcellularLocation>
        <location evidence="9">Cytoplasm</location>
    </subcellularLocation>
    <text>Translocation from the cytoplasm to the nucleus in the presence of AGL24.</text>
</comment>
<comment type="tissue specificity">
    <text>Widely expressed. Not found in the apical meristem of short-day grown plants in vegetative stage.</text>
</comment>
<comment type="developmental stage">
    <text evidence="10">Rapidly up-regulated in apical meristems during the transition to flowering. Transiently expressed in inflorescence meristem. Re-appears in stage 3 flowers, in the central dome that later will develop into stamens and carpels.</text>
</comment>
<comment type="induction">
    <text evidence="7 8 10 11">Up-regulated by gibberellins, vernalization and under long-day conditions. Gradual increase during vegetative growth. Induced by AGL24 at the shoot apex at the floral transitional stage. Repressed by SVP during the early stages of flower development. Inhibited by AP1 in emerging floral meristems (PubMed:17428825, PubMed:18339670, PubMed:19656343). Repressed by SHL to prevent flowering (PubMed:25281686).</text>
</comment>
<comment type="disruption phenotype">
    <text evidence="5">Plants are late-flowering.</text>
</comment>
<reference key="1">
    <citation type="journal article" date="2000" name="Plant J.">
        <title>A MADS domain gene involved in the transition to flowering in Arabidopsis.</title>
        <authorList>
            <person name="Borner R."/>
            <person name="Kampmann G."/>
            <person name="Chandler J."/>
            <person name="Gleissner R."/>
            <person name="Wisman E."/>
            <person name="Apel K."/>
            <person name="Melzer S."/>
        </authorList>
    </citation>
    <scope>NUCLEOTIDE SEQUENCE [MRNA]</scope>
    <scope>DISRUPTION PHENOTYPE</scope>
</reference>
<reference key="2">
    <citation type="journal article" date="1999" name="Nature">
        <title>Sequence and analysis of chromosome 2 of the plant Arabidopsis thaliana.</title>
        <authorList>
            <person name="Lin X."/>
            <person name="Kaul S."/>
            <person name="Rounsley S.D."/>
            <person name="Shea T.P."/>
            <person name="Benito M.-I."/>
            <person name="Town C.D."/>
            <person name="Fujii C.Y."/>
            <person name="Mason T.M."/>
            <person name="Bowman C.L."/>
            <person name="Barnstead M.E."/>
            <person name="Feldblyum T.V."/>
            <person name="Buell C.R."/>
            <person name="Ketchum K.A."/>
            <person name="Lee J.J."/>
            <person name="Ronning C.M."/>
            <person name="Koo H.L."/>
            <person name="Moffat K.S."/>
            <person name="Cronin L.A."/>
            <person name="Shen M."/>
            <person name="Pai G."/>
            <person name="Van Aken S."/>
            <person name="Umayam L."/>
            <person name="Tallon L.J."/>
            <person name="Gill J.E."/>
            <person name="Adams M.D."/>
            <person name="Carrera A.J."/>
            <person name="Creasy T.H."/>
            <person name="Goodman H.M."/>
            <person name="Somerville C.R."/>
            <person name="Copenhaver G.P."/>
            <person name="Preuss D."/>
            <person name="Nierman W.C."/>
            <person name="White O."/>
            <person name="Eisen J.A."/>
            <person name="Salzberg S.L."/>
            <person name="Fraser C.M."/>
            <person name="Venter J.C."/>
        </authorList>
    </citation>
    <scope>NUCLEOTIDE SEQUENCE [LARGE SCALE GENOMIC DNA]</scope>
    <source>
        <strain>cv. Columbia</strain>
    </source>
</reference>
<reference key="3">
    <citation type="journal article" date="2017" name="Plant J.">
        <title>Araport11: a complete reannotation of the Arabidopsis thaliana reference genome.</title>
        <authorList>
            <person name="Cheng C.Y."/>
            <person name="Krishnakumar V."/>
            <person name="Chan A.P."/>
            <person name="Thibaud-Nissen F."/>
            <person name="Schobel S."/>
            <person name="Town C.D."/>
        </authorList>
    </citation>
    <scope>GENOME REANNOTATION</scope>
    <source>
        <strain>cv. Columbia</strain>
    </source>
</reference>
<reference key="4">
    <citation type="journal article" date="2003" name="Science">
        <title>Empirical analysis of transcriptional activity in the Arabidopsis genome.</title>
        <authorList>
            <person name="Yamada K."/>
            <person name="Lim J."/>
            <person name="Dale J.M."/>
            <person name="Chen H."/>
            <person name="Shinn P."/>
            <person name="Palm C.J."/>
            <person name="Southwick A.M."/>
            <person name="Wu H.C."/>
            <person name="Kim C.J."/>
            <person name="Nguyen M."/>
            <person name="Pham P.K."/>
            <person name="Cheuk R.F."/>
            <person name="Karlin-Newmann G."/>
            <person name="Liu S.X."/>
            <person name="Lam B."/>
            <person name="Sakano H."/>
            <person name="Wu T."/>
            <person name="Yu G."/>
            <person name="Miranda M."/>
            <person name="Quach H.L."/>
            <person name="Tripp M."/>
            <person name="Chang C.H."/>
            <person name="Lee J.M."/>
            <person name="Toriumi M.J."/>
            <person name="Chan M.M."/>
            <person name="Tang C.C."/>
            <person name="Onodera C.S."/>
            <person name="Deng J.M."/>
            <person name="Akiyama K."/>
            <person name="Ansari Y."/>
            <person name="Arakawa T."/>
            <person name="Banh J."/>
            <person name="Banno F."/>
            <person name="Bowser L."/>
            <person name="Brooks S.Y."/>
            <person name="Carninci P."/>
            <person name="Chao Q."/>
            <person name="Choy N."/>
            <person name="Enju A."/>
            <person name="Goldsmith A.D."/>
            <person name="Gurjal M."/>
            <person name="Hansen N.F."/>
            <person name="Hayashizaki Y."/>
            <person name="Johnson-Hopson C."/>
            <person name="Hsuan V.W."/>
            <person name="Iida K."/>
            <person name="Karnes M."/>
            <person name="Khan S."/>
            <person name="Koesema E."/>
            <person name="Ishida J."/>
            <person name="Jiang P.X."/>
            <person name="Jones T."/>
            <person name="Kawai J."/>
            <person name="Kamiya A."/>
            <person name="Meyers C."/>
            <person name="Nakajima M."/>
            <person name="Narusaka M."/>
            <person name="Seki M."/>
            <person name="Sakurai T."/>
            <person name="Satou M."/>
            <person name="Tamse R."/>
            <person name="Vaysberg M."/>
            <person name="Wallender E.K."/>
            <person name="Wong C."/>
            <person name="Yamamura Y."/>
            <person name="Yuan S."/>
            <person name="Shinozaki K."/>
            <person name="Davis R.W."/>
            <person name="Theologis A."/>
            <person name="Ecker J.R."/>
        </authorList>
    </citation>
    <scope>NUCLEOTIDE SEQUENCE [LARGE SCALE MRNA]</scope>
    <source>
        <strain>cv. Columbia</strain>
    </source>
</reference>
<reference key="5">
    <citation type="journal article" date="2000" name="Genes Dev.">
        <title>The AGAMOUS-LIKE 20 MADS domain protein integrates floral inductive pathways in Arabidopsis.</title>
        <authorList>
            <person name="Lee H."/>
            <person name="Suh S.S."/>
            <person name="Park E."/>
            <person name="Cho E."/>
            <person name="Ahn J.H."/>
            <person name="Kim S.G."/>
            <person name="Lee J.S."/>
            <person name="Kwon Y.M."/>
            <person name="Lee I."/>
        </authorList>
    </citation>
    <scope>FUNCTION</scope>
    <source>
        <strain>cv. Landsberg erecta</strain>
    </source>
</reference>
<reference key="6">
    <citation type="journal article" date="2005" name="Plant Cell">
        <title>Comprehensive interaction map of the Arabidopsis MADS Box transcription factors.</title>
        <authorList>
            <person name="de Folter S."/>
            <person name="Immink R.G.H."/>
            <person name="Kieffer M."/>
            <person name="Parenicova L."/>
            <person name="Henz S.R."/>
            <person name="Weigel D."/>
            <person name="Busscher M."/>
            <person name="Kooiker M."/>
            <person name="Colombo L."/>
            <person name="Kater M.M."/>
            <person name="Davies B."/>
            <person name="Angenent G.C."/>
        </authorList>
    </citation>
    <scope>INTERACTION WITH AGL15; AGL16 AND AGL19</scope>
</reference>
<reference key="7">
    <citation type="journal article" date="2007" name="Development">
        <title>Specification of Arabidopsis floral meristem identity by repression of flowering time genes.</title>
        <authorList>
            <person name="Liu C."/>
            <person name="Zhou J."/>
            <person name="Bracha-Drori K."/>
            <person name="Yalovsky S."/>
            <person name="Ito T."/>
            <person name="Yu H."/>
        </authorList>
    </citation>
    <scope>INDUCTION BY AP1</scope>
</reference>
<reference key="8">
    <citation type="journal article" date="2008" name="Development">
        <title>Direct interaction of AGL24 and SOC1 integrates flowering signals in Arabidopsis.</title>
        <authorList>
            <person name="Liu C."/>
            <person name="Chen H."/>
            <person name="Er H.L."/>
            <person name="Soo H.M."/>
            <person name="Kumar P.P."/>
            <person name="Han J.-H."/>
            <person name="Liou Y.C."/>
            <person name="Yu H."/>
        </authorList>
    </citation>
    <scope>FUNCTION</scope>
    <scope>INDUCTION BY AGL24</scope>
</reference>
<reference key="9">
    <citation type="journal article" date="2008" name="J. Exp. Bot.">
        <title>FLC or not FLC: the other side of vernalization.</title>
        <authorList>
            <person name="Alexandre C.M."/>
            <person name="Hennig L."/>
        </authorList>
    </citation>
    <scope>REVIEW</scope>
</reference>
<reference key="10">
    <citation type="journal article" date="2008" name="Plant J.">
        <title>SOC1 translocated to the nucleus by interaction with AGL24 directly regulates leafy.</title>
        <authorList>
            <person name="Lee J."/>
            <person name="Oh M."/>
            <person name="Park H."/>
            <person name="Lee I."/>
        </authorList>
    </citation>
    <scope>FUNCTION</scope>
    <scope>MUTAGENESIS OF ARG-24; GLU-34 AND GLY-113</scope>
    <scope>INTERACTION WITH AGL24</scope>
    <scope>SUBCELLULAR LOCATION</scope>
</reference>
<reference key="11">
    <citation type="journal article" date="2009" name="Plant J.">
        <title>The Arabidopsis floral meristem identity genes AP1, AGL24 and SVP directly repress class B and C floral homeotic genes.</title>
        <authorList>
            <person name="Gregis V."/>
            <person name="Sessa A."/>
            <person name="Dorca-Fornell C."/>
            <person name="Kater M.M."/>
        </authorList>
    </citation>
    <scope>FUNCTION</scope>
    <scope>INDUCTION</scope>
    <scope>DEVELOPMENTAL STAGE</scope>
</reference>
<reference key="12">
    <citation type="journal article" date="2014" name="Plant Cell">
        <title>Chromatin-dependent repression of the Arabidopsis floral integrator genes involves plant specific PHD-containing proteins.</title>
        <authorList>
            <person name="Lopez-Gonzalez L."/>
            <person name="Mouriz A."/>
            <person name="Narro-Diego L."/>
            <person name="Bustos R."/>
            <person name="Martinez-Zapater J.M."/>
            <person name="Jarillo J.A."/>
            <person name="Pineiro M."/>
        </authorList>
    </citation>
    <scope>INDUCTION</scope>
    <source>
        <strain>cv. Columbia</strain>
        <strain>cv. Landsberg erecta</strain>
    </source>
</reference>
<reference key="13">
    <citation type="journal article" date="2019" name="Biochem. Biophys. Res. Commun.">
        <title>OXIDATIVE STRESS 3 regulates drought-induced flowering through APETALA 1.</title>
        <authorList>
            <person name="Liang M."/>
            <person name="Xiao S."/>
            <person name="Cai J."/>
            <person name="Ow D.W."/>
        </authorList>
    </citation>
    <scope>INTERACTION WITH OXS3</scope>
    <scope>SUBCELLULAR LOCATION</scope>
    <source>
        <strain>cv. Columbia</strain>
        <strain>cv. Wassilewskija-4</strain>
    </source>
</reference>
<protein>
    <recommendedName>
        <fullName evidence="15 16 17">MADS-box protein SOC1</fullName>
    </recommendedName>
    <alternativeName>
        <fullName evidence="13 14">Agamous-like MADS-box protein AGL20</fullName>
    </alternativeName>
    <alternativeName>
        <fullName evidence="15 16 17">Protein SUPPRESSOR OF CONSTANS OVEREXPRESSION 1</fullName>
    </alternativeName>
</protein>